<name>YJJB_ECO5E</name>
<sequence>MGVIEFLLALAQDMILAAIPAVGFAMVFNVPVRALRWCALLGSIGHGSRMILMTSGLNIEWSTFMASMLGGTIGIQWSRWYLAHPKVFTVAAVIPMFPGISAYTAMISAVKISQLGYSEPLMITLLTNFLTASSIVGALSIGLSIPGLWLYRKRPRV</sequence>
<proteinExistence type="inferred from homology"/>
<comment type="function">
    <text evidence="1">Involved in succinate export with YjjP. Both proteins are required for export.</text>
</comment>
<comment type="subunit">
    <text evidence="1">The transporter is composed of YjjB and YjjP.</text>
</comment>
<comment type="subcellular location">
    <subcellularLocation>
        <location evidence="1">Cell inner membrane</location>
        <topology evidence="1">Multi-pass membrane protein</topology>
    </subcellularLocation>
</comment>
<comment type="similarity">
    <text evidence="1">Belongs to the ThrE exporter (TC 2.A.79) family.</text>
</comment>
<keyword id="KW-0997">Cell inner membrane</keyword>
<keyword id="KW-1003">Cell membrane</keyword>
<keyword id="KW-0472">Membrane</keyword>
<keyword id="KW-0812">Transmembrane</keyword>
<keyword id="KW-1133">Transmembrane helix</keyword>
<keyword id="KW-0813">Transport</keyword>
<dbReference type="EMBL" id="CP001164">
    <property type="protein sequence ID" value="ACI34924.1"/>
    <property type="molecule type" value="Genomic_DNA"/>
</dbReference>
<dbReference type="RefSeq" id="WP_000538190.1">
    <property type="nucleotide sequence ID" value="NC_011353.1"/>
</dbReference>
<dbReference type="KEGG" id="ecf:ECH74115_5876"/>
<dbReference type="HOGENOM" id="CLU_117642_1_0_6"/>
<dbReference type="GO" id="GO:0005886">
    <property type="term" value="C:plasma membrane"/>
    <property type="evidence" value="ECO:0007669"/>
    <property type="project" value="UniProtKB-SubCell"/>
</dbReference>
<dbReference type="GO" id="GO:0015744">
    <property type="term" value="P:succinate transport"/>
    <property type="evidence" value="ECO:0007669"/>
    <property type="project" value="UniProtKB-UniRule"/>
</dbReference>
<dbReference type="HAMAP" id="MF_01191">
    <property type="entry name" value="YjjB"/>
    <property type="match status" value="1"/>
</dbReference>
<dbReference type="InterPro" id="IPR024528">
    <property type="entry name" value="ThrE_2"/>
</dbReference>
<dbReference type="InterPro" id="IPR050539">
    <property type="entry name" value="ThrE_Dicarb/AminoAcid_Exp"/>
</dbReference>
<dbReference type="InterPro" id="IPR020914">
    <property type="entry name" value="YjjB"/>
</dbReference>
<dbReference type="NCBIfam" id="NF007391">
    <property type="entry name" value="PRK09917.1"/>
    <property type="match status" value="1"/>
</dbReference>
<dbReference type="PANTHER" id="PTHR34390:SF1">
    <property type="entry name" value="SUCCINATE TRANSPORTER SUBUNIT YJJB-RELATED"/>
    <property type="match status" value="1"/>
</dbReference>
<dbReference type="PANTHER" id="PTHR34390">
    <property type="entry name" value="UPF0442 PROTEIN YJJB-RELATED"/>
    <property type="match status" value="1"/>
</dbReference>
<dbReference type="Pfam" id="PF12821">
    <property type="entry name" value="ThrE_2"/>
    <property type="match status" value="1"/>
</dbReference>
<feature type="chain" id="PRO_1000138365" description="Probable succinate transporter subunit YjjB">
    <location>
        <begin position="1"/>
        <end position="157"/>
    </location>
</feature>
<feature type="transmembrane region" description="Helical" evidence="1">
    <location>
        <begin position="8"/>
        <end position="28"/>
    </location>
</feature>
<feature type="transmembrane region" description="Helical" evidence="1">
    <location>
        <begin position="50"/>
        <end position="70"/>
    </location>
</feature>
<feature type="transmembrane region" description="Helical" evidence="1">
    <location>
        <begin position="87"/>
        <end position="107"/>
    </location>
</feature>
<feature type="transmembrane region" description="Helical" evidence="1">
    <location>
        <begin position="129"/>
        <end position="149"/>
    </location>
</feature>
<reference key="1">
    <citation type="journal article" date="2011" name="Proc. Natl. Acad. Sci. U.S.A.">
        <title>Genomic anatomy of Escherichia coli O157:H7 outbreaks.</title>
        <authorList>
            <person name="Eppinger M."/>
            <person name="Mammel M.K."/>
            <person name="Leclerc J.E."/>
            <person name="Ravel J."/>
            <person name="Cebula T.A."/>
        </authorList>
    </citation>
    <scope>NUCLEOTIDE SEQUENCE [LARGE SCALE GENOMIC DNA]</scope>
    <source>
        <strain>EC4115 / EHEC</strain>
    </source>
</reference>
<organism>
    <name type="scientific">Escherichia coli O157:H7 (strain EC4115 / EHEC)</name>
    <dbReference type="NCBI Taxonomy" id="444450"/>
    <lineage>
        <taxon>Bacteria</taxon>
        <taxon>Pseudomonadati</taxon>
        <taxon>Pseudomonadota</taxon>
        <taxon>Gammaproteobacteria</taxon>
        <taxon>Enterobacterales</taxon>
        <taxon>Enterobacteriaceae</taxon>
        <taxon>Escherichia</taxon>
    </lineage>
</organism>
<evidence type="ECO:0000255" key="1">
    <source>
        <dbReference type="HAMAP-Rule" id="MF_01191"/>
    </source>
</evidence>
<protein>
    <recommendedName>
        <fullName evidence="1">Probable succinate transporter subunit YjjB</fullName>
    </recommendedName>
</protein>
<accession>B5Z4P6</accession>
<gene>
    <name evidence="1" type="primary">yjjB</name>
    <name type="ordered locus">ECH74115_5876</name>
</gene>